<evidence type="ECO:0000250" key="1">
    <source>
        <dbReference type="UniProtKB" id="Q9H867"/>
    </source>
</evidence>
<evidence type="ECO:0000269" key="2">
    <source>
    </source>
</evidence>
<evidence type="ECO:0000303" key="3">
    <source>
    </source>
</evidence>
<evidence type="ECO:0000305" key="4"/>
<evidence type="ECO:0000305" key="5">
    <source>
    </source>
</evidence>
<feature type="initiator methionine" description="Removed" evidence="1">
    <location>
        <position position="1"/>
    </location>
</feature>
<feature type="chain" id="PRO_0000089938" description="Protein N-lysine methyltransferase METTL21D">
    <location>
        <begin position="2"/>
        <end position="228"/>
    </location>
</feature>
<feature type="binding site" evidence="1">
    <location>
        <position position="43"/>
    </location>
    <ligand>
        <name>S-adenosyl-L-methionine</name>
        <dbReference type="ChEBI" id="CHEBI:59789"/>
    </ligand>
</feature>
<feature type="binding site" evidence="1">
    <location>
        <begin position="75"/>
        <end position="77"/>
    </location>
    <ligand>
        <name>S-adenosyl-L-methionine</name>
        <dbReference type="ChEBI" id="CHEBI:59789"/>
    </ligand>
</feature>
<feature type="binding site" evidence="1">
    <location>
        <position position="96"/>
    </location>
    <ligand>
        <name>S-adenosyl-L-methionine</name>
        <dbReference type="ChEBI" id="CHEBI:59789"/>
    </ligand>
</feature>
<feature type="binding site" evidence="1">
    <location>
        <position position="126"/>
    </location>
    <ligand>
        <name>S-adenosyl-L-methionine</name>
        <dbReference type="ChEBI" id="CHEBI:59789"/>
    </ligand>
</feature>
<feature type="binding site" evidence="1">
    <location>
        <position position="142"/>
    </location>
    <ligand>
        <name>S-adenosyl-L-methionine</name>
        <dbReference type="ChEBI" id="CHEBI:59789"/>
    </ligand>
</feature>
<feature type="binding site" evidence="1">
    <location>
        <position position="147"/>
    </location>
    <ligand>
        <name>S-adenosyl-L-methionine</name>
        <dbReference type="ChEBI" id="CHEBI:59789"/>
    </ligand>
</feature>
<feature type="modified residue" description="N-acetylalanine" evidence="1">
    <location>
        <position position="2"/>
    </location>
</feature>
<feature type="splice variant" id="VSP_026588" description="In isoform 2." evidence="3">
    <location>
        <begin position="90"/>
        <end position="228"/>
    </location>
</feature>
<proteinExistence type="evidence at protein level"/>
<protein>
    <recommendedName>
        <fullName>Protein N-lysine methyltransferase METTL21D</fullName>
        <ecNumber evidence="2">2.1.1.-</ecNumber>
    </recommendedName>
    <alternativeName>
        <fullName>Methyltransferase-like protein 21D</fullName>
    </alternativeName>
    <alternativeName>
        <fullName>VCP lysine methyltransferase</fullName>
        <shortName>VCP-KMT</shortName>
    </alternativeName>
    <alternativeName>
        <fullName>Valosin-containing protein lysine methyltransferase</fullName>
    </alternativeName>
</protein>
<reference key="1">
    <citation type="journal article" date="2005" name="Science">
        <title>The transcriptional landscape of the mammalian genome.</title>
        <authorList>
            <person name="Carninci P."/>
            <person name="Kasukawa T."/>
            <person name="Katayama S."/>
            <person name="Gough J."/>
            <person name="Frith M.C."/>
            <person name="Maeda N."/>
            <person name="Oyama R."/>
            <person name="Ravasi T."/>
            <person name="Lenhard B."/>
            <person name="Wells C."/>
            <person name="Kodzius R."/>
            <person name="Shimokawa K."/>
            <person name="Bajic V.B."/>
            <person name="Brenner S.E."/>
            <person name="Batalov S."/>
            <person name="Forrest A.R."/>
            <person name="Zavolan M."/>
            <person name="Davis M.J."/>
            <person name="Wilming L.G."/>
            <person name="Aidinis V."/>
            <person name="Allen J.E."/>
            <person name="Ambesi-Impiombato A."/>
            <person name="Apweiler R."/>
            <person name="Aturaliya R.N."/>
            <person name="Bailey T.L."/>
            <person name="Bansal M."/>
            <person name="Baxter L."/>
            <person name="Beisel K.W."/>
            <person name="Bersano T."/>
            <person name="Bono H."/>
            <person name="Chalk A.M."/>
            <person name="Chiu K.P."/>
            <person name="Choudhary V."/>
            <person name="Christoffels A."/>
            <person name="Clutterbuck D.R."/>
            <person name="Crowe M.L."/>
            <person name="Dalla E."/>
            <person name="Dalrymple B.P."/>
            <person name="de Bono B."/>
            <person name="Della Gatta G."/>
            <person name="di Bernardo D."/>
            <person name="Down T."/>
            <person name="Engstrom P."/>
            <person name="Fagiolini M."/>
            <person name="Faulkner G."/>
            <person name="Fletcher C.F."/>
            <person name="Fukushima T."/>
            <person name="Furuno M."/>
            <person name="Futaki S."/>
            <person name="Gariboldi M."/>
            <person name="Georgii-Hemming P."/>
            <person name="Gingeras T.R."/>
            <person name="Gojobori T."/>
            <person name="Green R.E."/>
            <person name="Gustincich S."/>
            <person name="Harbers M."/>
            <person name="Hayashi Y."/>
            <person name="Hensch T.K."/>
            <person name="Hirokawa N."/>
            <person name="Hill D."/>
            <person name="Huminiecki L."/>
            <person name="Iacono M."/>
            <person name="Ikeo K."/>
            <person name="Iwama A."/>
            <person name="Ishikawa T."/>
            <person name="Jakt M."/>
            <person name="Kanapin A."/>
            <person name="Katoh M."/>
            <person name="Kawasawa Y."/>
            <person name="Kelso J."/>
            <person name="Kitamura H."/>
            <person name="Kitano H."/>
            <person name="Kollias G."/>
            <person name="Krishnan S.P."/>
            <person name="Kruger A."/>
            <person name="Kummerfeld S.K."/>
            <person name="Kurochkin I.V."/>
            <person name="Lareau L.F."/>
            <person name="Lazarevic D."/>
            <person name="Lipovich L."/>
            <person name="Liu J."/>
            <person name="Liuni S."/>
            <person name="McWilliam S."/>
            <person name="Madan Babu M."/>
            <person name="Madera M."/>
            <person name="Marchionni L."/>
            <person name="Matsuda H."/>
            <person name="Matsuzawa S."/>
            <person name="Miki H."/>
            <person name="Mignone F."/>
            <person name="Miyake S."/>
            <person name="Morris K."/>
            <person name="Mottagui-Tabar S."/>
            <person name="Mulder N."/>
            <person name="Nakano N."/>
            <person name="Nakauchi H."/>
            <person name="Ng P."/>
            <person name="Nilsson R."/>
            <person name="Nishiguchi S."/>
            <person name="Nishikawa S."/>
            <person name="Nori F."/>
            <person name="Ohara O."/>
            <person name="Okazaki Y."/>
            <person name="Orlando V."/>
            <person name="Pang K.C."/>
            <person name="Pavan W.J."/>
            <person name="Pavesi G."/>
            <person name="Pesole G."/>
            <person name="Petrovsky N."/>
            <person name="Piazza S."/>
            <person name="Reed J."/>
            <person name="Reid J.F."/>
            <person name="Ring B.Z."/>
            <person name="Ringwald M."/>
            <person name="Rost B."/>
            <person name="Ruan Y."/>
            <person name="Salzberg S.L."/>
            <person name="Sandelin A."/>
            <person name="Schneider C."/>
            <person name="Schoenbach C."/>
            <person name="Sekiguchi K."/>
            <person name="Semple C.A."/>
            <person name="Seno S."/>
            <person name="Sessa L."/>
            <person name="Sheng Y."/>
            <person name="Shibata Y."/>
            <person name="Shimada H."/>
            <person name="Shimada K."/>
            <person name="Silva D."/>
            <person name="Sinclair B."/>
            <person name="Sperling S."/>
            <person name="Stupka E."/>
            <person name="Sugiura K."/>
            <person name="Sultana R."/>
            <person name="Takenaka Y."/>
            <person name="Taki K."/>
            <person name="Tammoja K."/>
            <person name="Tan S.L."/>
            <person name="Tang S."/>
            <person name="Taylor M.S."/>
            <person name="Tegner J."/>
            <person name="Teichmann S.A."/>
            <person name="Ueda H.R."/>
            <person name="van Nimwegen E."/>
            <person name="Verardo R."/>
            <person name="Wei C.L."/>
            <person name="Yagi K."/>
            <person name="Yamanishi H."/>
            <person name="Zabarovsky E."/>
            <person name="Zhu S."/>
            <person name="Zimmer A."/>
            <person name="Hide W."/>
            <person name="Bult C."/>
            <person name="Grimmond S.M."/>
            <person name="Teasdale R.D."/>
            <person name="Liu E.T."/>
            <person name="Brusic V."/>
            <person name="Quackenbush J."/>
            <person name="Wahlestedt C."/>
            <person name="Mattick J.S."/>
            <person name="Hume D.A."/>
            <person name="Kai C."/>
            <person name="Sasaki D."/>
            <person name="Tomaru Y."/>
            <person name="Fukuda S."/>
            <person name="Kanamori-Katayama M."/>
            <person name="Suzuki M."/>
            <person name="Aoki J."/>
            <person name="Arakawa T."/>
            <person name="Iida J."/>
            <person name="Imamura K."/>
            <person name="Itoh M."/>
            <person name="Kato T."/>
            <person name="Kawaji H."/>
            <person name="Kawagashira N."/>
            <person name="Kawashima T."/>
            <person name="Kojima M."/>
            <person name="Kondo S."/>
            <person name="Konno H."/>
            <person name="Nakano K."/>
            <person name="Ninomiya N."/>
            <person name="Nishio T."/>
            <person name="Okada M."/>
            <person name="Plessy C."/>
            <person name="Shibata K."/>
            <person name="Shiraki T."/>
            <person name="Suzuki S."/>
            <person name="Tagami M."/>
            <person name="Waki K."/>
            <person name="Watahiki A."/>
            <person name="Okamura-Oho Y."/>
            <person name="Suzuki H."/>
            <person name="Kawai J."/>
            <person name="Hayashizaki Y."/>
        </authorList>
    </citation>
    <scope>NUCLEOTIDE SEQUENCE [LARGE SCALE MRNA] (ISOFORMS 1 AND 2)</scope>
    <source>
        <strain>C57BL/6J</strain>
        <tissue>Hippocampus</tissue>
        <tissue>Lung</tissue>
    </source>
</reference>
<reference key="2">
    <citation type="journal article" date="2004" name="Genome Res.">
        <title>The status, quality, and expansion of the NIH full-length cDNA project: the Mammalian Gene Collection (MGC).</title>
        <authorList>
            <consortium name="The MGC Project Team"/>
        </authorList>
    </citation>
    <scope>NUCLEOTIDE SEQUENCE [LARGE SCALE MRNA] (ISOFORM 1)</scope>
    <source>
        <tissue>Brain</tissue>
    </source>
</reference>
<reference key="3">
    <citation type="journal article" date="2015" name="PLoS ONE">
        <title>Lysine Methylation of the Valosin-Containing Protein (VCP) Is Dispensable for Development and Survival of Mice.</title>
        <authorList>
            <person name="Fusser M."/>
            <person name="Kernstock S."/>
            <person name="Aileni V.K."/>
            <person name="Egge-Jacobsen W."/>
            <person name="Falnes P.O."/>
            <person name="Klungland A."/>
        </authorList>
    </citation>
    <scope>SUBCELLULAR LOCATION</scope>
    <scope>DISRUPTION PHENOTYPE</scope>
    <scope>FUNCTION</scope>
    <scope>CATALYTIC ACTIVITY</scope>
    <scope>TISSUE SPECIFICITY</scope>
</reference>
<keyword id="KW-0007">Acetylation</keyword>
<keyword id="KW-0025">Alternative splicing</keyword>
<keyword id="KW-0963">Cytoplasm</keyword>
<keyword id="KW-0489">Methyltransferase</keyword>
<keyword id="KW-1185">Reference proteome</keyword>
<keyword id="KW-0949">S-adenosyl-L-methionine</keyword>
<keyword id="KW-0808">Transferase</keyword>
<organism>
    <name type="scientific">Mus musculus</name>
    <name type="common">Mouse</name>
    <dbReference type="NCBI Taxonomy" id="10090"/>
    <lineage>
        <taxon>Eukaryota</taxon>
        <taxon>Metazoa</taxon>
        <taxon>Chordata</taxon>
        <taxon>Craniata</taxon>
        <taxon>Vertebrata</taxon>
        <taxon>Euteleostomi</taxon>
        <taxon>Mammalia</taxon>
        <taxon>Eutheria</taxon>
        <taxon>Euarchontoglires</taxon>
        <taxon>Glires</taxon>
        <taxon>Rodentia</taxon>
        <taxon>Myomorpha</taxon>
        <taxon>Muroidea</taxon>
        <taxon>Muridae</taxon>
        <taxon>Murinae</taxon>
        <taxon>Mus</taxon>
        <taxon>Mus</taxon>
    </lineage>
</organism>
<gene>
    <name type="primary">Vcpkmt</name>
    <name type="synonym">Gm71</name>
    <name type="synonym">Mettl21d</name>
</gene>
<accession>Q8C436</accession>
<accession>B2RSP0</accession>
<accession>Q3UML0</accession>
<dbReference type="EC" id="2.1.1.-" evidence="2"/>
<dbReference type="EMBL" id="AK083148">
    <property type="protein sequence ID" value="BAC38784.1"/>
    <property type="molecule type" value="mRNA"/>
</dbReference>
<dbReference type="EMBL" id="AK144832">
    <property type="protein sequence ID" value="BAE26088.1"/>
    <property type="molecule type" value="mRNA"/>
</dbReference>
<dbReference type="EMBL" id="BC138942">
    <property type="protein sequence ID" value="AAI38943.1"/>
    <property type="molecule type" value="mRNA"/>
</dbReference>
<dbReference type="EMBL" id="BC138943">
    <property type="protein sequence ID" value="AAI38944.1"/>
    <property type="molecule type" value="mRNA"/>
</dbReference>
<dbReference type="CCDS" id="CCDS36464.1">
    <molecule id="Q8C436-1"/>
</dbReference>
<dbReference type="RefSeq" id="NP_001028408.2">
    <molecule id="Q8C436-1"/>
    <property type="nucleotide sequence ID" value="NM_001033236.3"/>
</dbReference>
<dbReference type="SMR" id="Q8C436"/>
<dbReference type="BioGRID" id="228939">
    <property type="interactions" value="2"/>
</dbReference>
<dbReference type="FunCoup" id="Q8C436">
    <property type="interactions" value="1523"/>
</dbReference>
<dbReference type="STRING" id="10090.ENSMUSP00000055002"/>
<dbReference type="PhosphoSitePlus" id="Q8C436"/>
<dbReference type="PaxDb" id="10090-ENSMUSP00000055002"/>
<dbReference type="PeptideAtlas" id="Q8C436"/>
<dbReference type="ProteomicsDB" id="290104">
    <molecule id="Q8C436-1"/>
</dbReference>
<dbReference type="ProteomicsDB" id="290105">
    <molecule id="Q8C436-2"/>
</dbReference>
<dbReference type="Pumba" id="Q8C436"/>
<dbReference type="Antibodypedia" id="10369">
    <property type="antibodies" value="18 antibodies from 11 providers"/>
</dbReference>
<dbReference type="Ensembl" id="ENSMUST00000058639.11">
    <molecule id="Q8C436-1"/>
    <property type="protein sequence ID" value="ENSMUSP00000055002.10"/>
    <property type="gene ID" value="ENSMUSG00000049882.11"/>
</dbReference>
<dbReference type="GeneID" id="207965"/>
<dbReference type="KEGG" id="mmu:207965"/>
<dbReference type="UCSC" id="uc007nsl.1">
    <molecule id="Q8C436-1"/>
    <property type="organism name" value="mouse"/>
</dbReference>
<dbReference type="AGR" id="MGI:2684917"/>
<dbReference type="CTD" id="79609"/>
<dbReference type="MGI" id="MGI:2684917">
    <property type="gene designation" value="Vcpkmt"/>
</dbReference>
<dbReference type="VEuPathDB" id="HostDB:ENSMUSG00000049882"/>
<dbReference type="eggNOG" id="KOG2793">
    <property type="taxonomic scope" value="Eukaryota"/>
</dbReference>
<dbReference type="GeneTree" id="ENSGT00940000157135"/>
<dbReference type="HOGENOM" id="CLU_055721_5_1_1"/>
<dbReference type="InParanoid" id="Q8C436"/>
<dbReference type="OMA" id="RRADMRF"/>
<dbReference type="OrthoDB" id="413520at2759"/>
<dbReference type="PhylomeDB" id="Q8C436"/>
<dbReference type="TreeFam" id="TF352990"/>
<dbReference type="Reactome" id="R-MMU-8876725">
    <property type="pathway name" value="Protein methylation"/>
</dbReference>
<dbReference type="BioGRID-ORCS" id="207965">
    <property type="hits" value="0 hits in 77 CRISPR screens"/>
</dbReference>
<dbReference type="PRO" id="PR:Q8C436"/>
<dbReference type="Proteomes" id="UP000000589">
    <property type="component" value="Chromosome 12"/>
</dbReference>
<dbReference type="RNAct" id="Q8C436">
    <property type="molecule type" value="protein"/>
</dbReference>
<dbReference type="Bgee" id="ENSMUSG00000049882">
    <property type="expression patterns" value="Expressed in mesodermal cell in embryo and 215 other cell types or tissues"/>
</dbReference>
<dbReference type="ExpressionAtlas" id="Q8C436">
    <property type="expression patterns" value="baseline and differential"/>
</dbReference>
<dbReference type="GO" id="GO:0005737">
    <property type="term" value="C:cytoplasm"/>
    <property type="evidence" value="ECO:0000314"/>
    <property type="project" value="UniProtKB"/>
</dbReference>
<dbReference type="GO" id="GO:0005829">
    <property type="term" value="C:cytosol"/>
    <property type="evidence" value="ECO:0007669"/>
    <property type="project" value="Ensembl"/>
</dbReference>
<dbReference type="GO" id="GO:0032991">
    <property type="term" value="C:protein-containing complex"/>
    <property type="evidence" value="ECO:0007669"/>
    <property type="project" value="Ensembl"/>
</dbReference>
<dbReference type="GO" id="GO:0051117">
    <property type="term" value="F:ATPase binding"/>
    <property type="evidence" value="ECO:0007669"/>
    <property type="project" value="Ensembl"/>
</dbReference>
<dbReference type="GO" id="GO:0008276">
    <property type="term" value="F:protein methyltransferase activity"/>
    <property type="evidence" value="ECO:0000315"/>
    <property type="project" value="UniProtKB"/>
</dbReference>
<dbReference type="GO" id="GO:0016279">
    <property type="term" value="F:protein-lysine N-methyltransferase activity"/>
    <property type="evidence" value="ECO:0000250"/>
    <property type="project" value="UniProtKB"/>
</dbReference>
<dbReference type="GO" id="GO:0018023">
    <property type="term" value="P:peptidyl-lysine trimethylation"/>
    <property type="evidence" value="ECO:0000315"/>
    <property type="project" value="UniProtKB"/>
</dbReference>
<dbReference type="CDD" id="cd02440">
    <property type="entry name" value="AdoMet_MTases"/>
    <property type="match status" value="1"/>
</dbReference>
<dbReference type="FunFam" id="3.40.50.150:FF:000134">
    <property type="entry name" value="protein-lysine methyltransferase METTL21D isoform X1"/>
    <property type="match status" value="1"/>
</dbReference>
<dbReference type="Gene3D" id="3.40.50.150">
    <property type="entry name" value="Vaccinia Virus protein VP39"/>
    <property type="match status" value="1"/>
</dbReference>
<dbReference type="InterPro" id="IPR019410">
    <property type="entry name" value="Methyltransf_16"/>
</dbReference>
<dbReference type="InterPro" id="IPR029063">
    <property type="entry name" value="SAM-dependent_MTases_sf"/>
</dbReference>
<dbReference type="PANTHER" id="PTHR14614">
    <property type="entry name" value="HEPATOCELLULAR CARCINOMA-ASSOCIATED ANTIGEN"/>
    <property type="match status" value="1"/>
</dbReference>
<dbReference type="PANTHER" id="PTHR14614:SF44">
    <property type="entry name" value="PROTEIN N-LYSINE METHYLTRANSFERASE METTL21D"/>
    <property type="match status" value="1"/>
</dbReference>
<dbReference type="Pfam" id="PF10294">
    <property type="entry name" value="Methyltransf_16"/>
    <property type="match status" value="1"/>
</dbReference>
<dbReference type="SUPFAM" id="SSF53335">
    <property type="entry name" value="S-adenosyl-L-methionine-dependent methyltransferases"/>
    <property type="match status" value="1"/>
</dbReference>
<sequence length="228" mass="25535">MAAAVEPEVEDPLWSFVRVLEKRDGTVLRLQQYGSGGVGCVVWDAAIVLSKYLETPGFSGDGAHALSRRSVLELGSGTGAVGLMAATLGADVIVTDLEELQDLLKMNIDMNKHLVTGSVQAKVLKWGEDIEDLMSPDYILMADCIYYEESLEPLLKTLKDLSGSETCIICCYEQRTMGKNPEIEKKYFELLQLDFDFEEIPLDKHDEEYRSEDIHIVYIRKKKPKPPS</sequence>
<name>MT21D_MOUSE</name>
<comment type="function">
    <text evidence="2">Protein N-lysine methyltransferase that specifically trimethylates 'Lys-315' of VCP/p97; this modification may decrease VCP ATPase activity.</text>
</comment>
<comment type="catalytic activity">
    <reaction evidence="2">
        <text>L-lysyl-[protein] + 3 S-adenosyl-L-methionine = N(6),N(6),N(6)-trimethyl-L-lysyl-[protein] + 3 S-adenosyl-L-homocysteine + 3 H(+)</text>
        <dbReference type="Rhea" id="RHEA:54192"/>
        <dbReference type="Rhea" id="RHEA-COMP:9752"/>
        <dbReference type="Rhea" id="RHEA-COMP:13826"/>
        <dbReference type="ChEBI" id="CHEBI:15378"/>
        <dbReference type="ChEBI" id="CHEBI:29969"/>
        <dbReference type="ChEBI" id="CHEBI:57856"/>
        <dbReference type="ChEBI" id="CHEBI:59789"/>
        <dbReference type="ChEBI" id="CHEBI:61961"/>
    </reaction>
    <physiologicalReaction direction="left-to-right" evidence="5">
        <dbReference type="Rhea" id="RHEA:54193"/>
    </physiologicalReaction>
</comment>
<comment type="subunit">
    <text evidence="1">Interacts with ALKBH6. Interacts with ASPSCR1 and UBXN6; interaction with ASPSCR1, but not with UBXN6, enhances VCP methylation.</text>
</comment>
<comment type="subcellular location">
    <subcellularLocation>
        <location evidence="2">Cytoplasm</location>
    </subcellularLocation>
</comment>
<comment type="alternative products">
    <event type="alternative splicing"/>
    <isoform>
        <id>Q8C436-1</id>
        <name>1</name>
        <sequence type="displayed"/>
    </isoform>
    <isoform>
        <id>Q8C436-2</id>
        <name>2</name>
        <sequence type="described" ref="VSP_026588"/>
    </isoform>
</comment>
<comment type="tissue specificity">
    <text evidence="2">Widely expressed.</text>
</comment>
<comment type="disruption phenotype">
    <text evidence="2">Deficient mice are viable, fertile and have no obvious pathological phenotype.</text>
</comment>
<comment type="similarity">
    <text evidence="4">Belongs to the methyltransferase superfamily. METTL21 family.</text>
</comment>